<reference key="1">
    <citation type="journal article" date="2009" name="PLoS Genet.">
        <title>Organised genome dynamics in the Escherichia coli species results in highly diverse adaptive paths.</title>
        <authorList>
            <person name="Touchon M."/>
            <person name="Hoede C."/>
            <person name="Tenaillon O."/>
            <person name="Barbe V."/>
            <person name="Baeriswyl S."/>
            <person name="Bidet P."/>
            <person name="Bingen E."/>
            <person name="Bonacorsi S."/>
            <person name="Bouchier C."/>
            <person name="Bouvet O."/>
            <person name="Calteau A."/>
            <person name="Chiapello H."/>
            <person name="Clermont O."/>
            <person name="Cruveiller S."/>
            <person name="Danchin A."/>
            <person name="Diard M."/>
            <person name="Dossat C."/>
            <person name="Karoui M.E."/>
            <person name="Frapy E."/>
            <person name="Garry L."/>
            <person name="Ghigo J.M."/>
            <person name="Gilles A.M."/>
            <person name="Johnson J."/>
            <person name="Le Bouguenec C."/>
            <person name="Lescat M."/>
            <person name="Mangenot S."/>
            <person name="Martinez-Jehanne V."/>
            <person name="Matic I."/>
            <person name="Nassif X."/>
            <person name="Oztas S."/>
            <person name="Petit M.A."/>
            <person name="Pichon C."/>
            <person name="Rouy Z."/>
            <person name="Ruf C.S."/>
            <person name="Schneider D."/>
            <person name="Tourret J."/>
            <person name="Vacherie B."/>
            <person name="Vallenet D."/>
            <person name="Medigue C."/>
            <person name="Rocha E.P.C."/>
            <person name="Denamur E."/>
        </authorList>
    </citation>
    <scope>NUCLEOTIDE SEQUENCE [LARGE SCALE GENOMIC DNA]</scope>
    <source>
        <strain>55989 / EAEC</strain>
    </source>
</reference>
<keyword id="KW-0963">Cytoplasm</keyword>
<keyword id="KW-0224">Dipeptidase</keyword>
<keyword id="KW-0378">Hydrolase</keyword>
<keyword id="KW-0645">Protease</keyword>
<keyword id="KW-1185">Reference proteome</keyword>
<keyword id="KW-0720">Serine protease</keyword>
<organism>
    <name type="scientific">Escherichia coli (strain 55989 / EAEC)</name>
    <dbReference type="NCBI Taxonomy" id="585055"/>
    <lineage>
        <taxon>Bacteria</taxon>
        <taxon>Pseudomonadati</taxon>
        <taxon>Pseudomonadota</taxon>
        <taxon>Gammaproteobacteria</taxon>
        <taxon>Enterobacterales</taxon>
        <taxon>Enterobacteriaceae</taxon>
        <taxon>Escherichia</taxon>
    </lineage>
</organism>
<protein>
    <recommendedName>
        <fullName evidence="1">Peptidase E</fullName>
        <ecNumber evidence="1">3.4.13.21</ecNumber>
    </recommendedName>
    <alternativeName>
        <fullName evidence="1">Alpha-aspartyl dipeptidase</fullName>
    </alternativeName>
    <alternativeName>
        <fullName evidence="1">Asp-specific dipeptidase</fullName>
    </alternativeName>
    <alternativeName>
        <fullName evidence="1">Dipeptidase E</fullName>
    </alternativeName>
</protein>
<sequence length="229" mass="24570">MELLLLSNSTLPGKAWLEHALPLIAEQLQGRRSAVFIPFAGVTQTWDDYTAKTAAVLAPLGVSVTGIHSVVDPVAAIENAEIVIVGGGNTFQLLKQCRERGLLAPITDVVKRGALYIGWSAGANLACPTIRTTNDMPIVDPQGFDALNLFPLQINPHFTNALPEGHKGETREQRIRELLVVAPELTIIGLPEGNWITVSKGHATLGGPNTTYVFKAGEEAVPLEAGHRF</sequence>
<evidence type="ECO:0000255" key="1">
    <source>
        <dbReference type="HAMAP-Rule" id="MF_00510"/>
    </source>
</evidence>
<accession>B7LAW3</accession>
<name>PEPE_ECO55</name>
<proteinExistence type="inferred from homology"/>
<feature type="chain" id="PRO_1000146096" description="Peptidase E">
    <location>
        <begin position="1"/>
        <end position="229"/>
    </location>
</feature>
<feature type="active site" description="Charge relay system" evidence="1">
    <location>
        <position position="120"/>
    </location>
</feature>
<feature type="active site" description="Charge relay system" evidence="1">
    <location>
        <position position="135"/>
    </location>
</feature>
<feature type="active site" description="Charge relay system" evidence="1">
    <location>
        <position position="157"/>
    </location>
</feature>
<gene>
    <name evidence="1" type="primary">pepE</name>
    <name type="ordered locus">EC55989_4506</name>
</gene>
<dbReference type="EC" id="3.4.13.21" evidence="1"/>
<dbReference type="EMBL" id="CU928145">
    <property type="protein sequence ID" value="CAV01280.1"/>
    <property type="molecule type" value="Genomic_DNA"/>
</dbReference>
<dbReference type="RefSeq" id="WP_000421763.1">
    <property type="nucleotide sequence ID" value="NC_011748.1"/>
</dbReference>
<dbReference type="SMR" id="B7LAW3"/>
<dbReference type="MEROPS" id="S51.001"/>
<dbReference type="GeneID" id="93777874"/>
<dbReference type="KEGG" id="eck:EC55989_4506"/>
<dbReference type="HOGENOM" id="CLU_071689_0_0_6"/>
<dbReference type="Proteomes" id="UP000000746">
    <property type="component" value="Chromosome"/>
</dbReference>
<dbReference type="GO" id="GO:0005737">
    <property type="term" value="C:cytoplasm"/>
    <property type="evidence" value="ECO:0007669"/>
    <property type="project" value="UniProtKB-SubCell"/>
</dbReference>
<dbReference type="GO" id="GO:0016805">
    <property type="term" value="F:dipeptidase activity"/>
    <property type="evidence" value="ECO:0007669"/>
    <property type="project" value="UniProtKB-UniRule"/>
</dbReference>
<dbReference type="GO" id="GO:0008236">
    <property type="term" value="F:serine-type peptidase activity"/>
    <property type="evidence" value="ECO:0007669"/>
    <property type="project" value="UniProtKB-KW"/>
</dbReference>
<dbReference type="GO" id="GO:0006508">
    <property type="term" value="P:proteolysis"/>
    <property type="evidence" value="ECO:0007669"/>
    <property type="project" value="UniProtKB-UniRule"/>
</dbReference>
<dbReference type="CDD" id="cd03146">
    <property type="entry name" value="GAT1_Peptidase_E"/>
    <property type="match status" value="1"/>
</dbReference>
<dbReference type="FunFam" id="3.40.50.880:FF:000007">
    <property type="entry name" value="Peptidase E"/>
    <property type="match status" value="1"/>
</dbReference>
<dbReference type="Gene3D" id="3.40.50.880">
    <property type="match status" value="1"/>
</dbReference>
<dbReference type="HAMAP" id="MF_00510">
    <property type="entry name" value="Peptidase_E"/>
    <property type="match status" value="1"/>
</dbReference>
<dbReference type="InterPro" id="IPR029062">
    <property type="entry name" value="Class_I_gatase-like"/>
</dbReference>
<dbReference type="InterPro" id="IPR005320">
    <property type="entry name" value="Peptidase_S51"/>
</dbReference>
<dbReference type="InterPro" id="IPR023172">
    <property type="entry name" value="Peptidase_S51_dipeptidase-E"/>
</dbReference>
<dbReference type="NCBIfam" id="NF003642">
    <property type="entry name" value="PRK05282.1"/>
    <property type="match status" value="1"/>
</dbReference>
<dbReference type="PANTHER" id="PTHR20842:SF0">
    <property type="entry name" value="ALPHA-ASPARTYL DIPEPTIDASE"/>
    <property type="match status" value="1"/>
</dbReference>
<dbReference type="PANTHER" id="PTHR20842">
    <property type="entry name" value="PROTEASE S51 ALPHA-ASPARTYL DIPEPTIDASE"/>
    <property type="match status" value="1"/>
</dbReference>
<dbReference type="Pfam" id="PF03575">
    <property type="entry name" value="Peptidase_S51"/>
    <property type="match status" value="1"/>
</dbReference>
<dbReference type="SUPFAM" id="SSF52317">
    <property type="entry name" value="Class I glutamine amidotransferase-like"/>
    <property type="match status" value="1"/>
</dbReference>
<comment type="function">
    <text evidence="1">Hydrolyzes dipeptides containing N-terminal aspartate residues. May play a role in allowing the cell to use peptide aspartate to spare carbon otherwise required for the synthesis of the aspartate family of amino acids.</text>
</comment>
<comment type="catalytic activity">
    <reaction evidence="1">
        <text>Dipeptidase E catalyzes the hydrolysis of dipeptides Asp-|-Xaa. It does not act on peptides with N-terminal Glu, Asn or Gln, nor does it cleave isoaspartyl peptides.</text>
        <dbReference type="EC" id="3.4.13.21"/>
    </reaction>
</comment>
<comment type="subcellular location">
    <subcellularLocation>
        <location evidence="1">Cytoplasm</location>
    </subcellularLocation>
</comment>
<comment type="similarity">
    <text evidence="1">Belongs to the peptidase S51 family.</text>
</comment>